<evidence type="ECO:0000255" key="1">
    <source>
        <dbReference type="HAMAP-Rule" id="MF_01100"/>
    </source>
</evidence>
<evidence type="ECO:0000255" key="2">
    <source>
        <dbReference type="PROSITE-ProRule" id="PRU01175"/>
    </source>
</evidence>
<keyword id="KW-0963">Cytoplasm</keyword>
<keyword id="KW-0378">Hydrolase</keyword>
<keyword id="KW-0479">Metal-binding</keyword>
<keyword id="KW-0547">Nucleotide-binding</keyword>
<reference key="1">
    <citation type="journal article" date="2006" name="BMC Genomics">
        <title>Complete genome sequence of Shigella flexneri 5b and comparison with Shigella flexneri 2a.</title>
        <authorList>
            <person name="Nie H."/>
            <person name="Yang F."/>
            <person name="Zhang X."/>
            <person name="Yang J."/>
            <person name="Chen L."/>
            <person name="Wang J."/>
            <person name="Xiong Z."/>
            <person name="Peng J."/>
            <person name="Sun L."/>
            <person name="Dong J."/>
            <person name="Xue Y."/>
            <person name="Xu X."/>
            <person name="Chen S."/>
            <person name="Yao Z."/>
            <person name="Shen Y."/>
            <person name="Jin Q."/>
        </authorList>
    </citation>
    <scope>NUCLEOTIDE SEQUENCE [LARGE SCALE GENOMIC DNA]</scope>
    <source>
        <strain>8401</strain>
    </source>
</reference>
<name>5DNU_SHIF8</name>
<gene>
    <name evidence="1" type="primary">yfbR</name>
    <name type="ordered locus">SFV_2358</name>
</gene>
<protein>
    <recommendedName>
        <fullName evidence="1">5'-deoxynucleotidase YfbR</fullName>
        <ecNumber evidence="1">3.1.3.89</ecNumber>
    </recommendedName>
    <alternativeName>
        <fullName evidence="1">5'-deoxyribonucleotidase</fullName>
    </alternativeName>
    <alternativeName>
        <fullName evidence="1">Nucleoside 5'-monophosphate phosphohydrolase</fullName>
    </alternativeName>
</protein>
<dbReference type="EC" id="3.1.3.89" evidence="1"/>
<dbReference type="EMBL" id="CP000266">
    <property type="protein sequence ID" value="ABF04469.1"/>
    <property type="molecule type" value="Genomic_DNA"/>
</dbReference>
<dbReference type="RefSeq" id="WP_000813851.1">
    <property type="nucleotide sequence ID" value="NC_008258.1"/>
</dbReference>
<dbReference type="SMR" id="Q0T2J6"/>
<dbReference type="KEGG" id="sfv:SFV_2358"/>
<dbReference type="HOGENOM" id="CLU_084784_0_0_6"/>
<dbReference type="Proteomes" id="UP000000659">
    <property type="component" value="Chromosome"/>
</dbReference>
<dbReference type="GO" id="GO:0005737">
    <property type="term" value="C:cytoplasm"/>
    <property type="evidence" value="ECO:0007669"/>
    <property type="project" value="UniProtKB-SubCell"/>
</dbReference>
<dbReference type="GO" id="GO:0002953">
    <property type="term" value="F:5'-deoxynucleotidase activity"/>
    <property type="evidence" value="ECO:0007669"/>
    <property type="project" value="UniProtKB-EC"/>
</dbReference>
<dbReference type="GO" id="GO:0046872">
    <property type="term" value="F:metal ion binding"/>
    <property type="evidence" value="ECO:0007669"/>
    <property type="project" value="UniProtKB-KW"/>
</dbReference>
<dbReference type="GO" id="GO:0000166">
    <property type="term" value="F:nucleotide binding"/>
    <property type="evidence" value="ECO:0007669"/>
    <property type="project" value="UniProtKB-KW"/>
</dbReference>
<dbReference type="CDD" id="cd00077">
    <property type="entry name" value="HDc"/>
    <property type="match status" value="1"/>
</dbReference>
<dbReference type="FunFam" id="1.10.3210.10:FF:000002">
    <property type="entry name" value="Nucleotidase YfbR"/>
    <property type="match status" value="1"/>
</dbReference>
<dbReference type="Gene3D" id="1.10.3210.10">
    <property type="entry name" value="Hypothetical protein af1432"/>
    <property type="match status" value="1"/>
</dbReference>
<dbReference type="HAMAP" id="MF_01100">
    <property type="entry name" value="5DNU"/>
    <property type="match status" value="1"/>
</dbReference>
<dbReference type="InterPro" id="IPR003607">
    <property type="entry name" value="HD/PDEase_dom"/>
</dbReference>
<dbReference type="InterPro" id="IPR006674">
    <property type="entry name" value="HD_domain"/>
</dbReference>
<dbReference type="InterPro" id="IPR022971">
    <property type="entry name" value="YfbR"/>
</dbReference>
<dbReference type="InterPro" id="IPR039356">
    <property type="entry name" value="YfbR/HDDC2"/>
</dbReference>
<dbReference type="NCBIfam" id="NF003009">
    <property type="entry name" value="PRK03826.1"/>
    <property type="match status" value="1"/>
</dbReference>
<dbReference type="PANTHER" id="PTHR11845">
    <property type="entry name" value="5'-DEOXYNUCLEOTIDASE HDDC2"/>
    <property type="match status" value="1"/>
</dbReference>
<dbReference type="PANTHER" id="PTHR11845:SF13">
    <property type="entry name" value="5'-DEOXYNUCLEOTIDASE HDDC2"/>
    <property type="match status" value="1"/>
</dbReference>
<dbReference type="Pfam" id="PF12917">
    <property type="entry name" value="YfbR-like"/>
    <property type="match status" value="1"/>
</dbReference>
<dbReference type="SMART" id="SM00471">
    <property type="entry name" value="HDc"/>
    <property type="match status" value="1"/>
</dbReference>
<dbReference type="SUPFAM" id="SSF109604">
    <property type="entry name" value="HD-domain/PDEase-like"/>
    <property type="match status" value="1"/>
</dbReference>
<dbReference type="PROSITE" id="PS51831">
    <property type="entry name" value="HD"/>
    <property type="match status" value="1"/>
</dbReference>
<accession>Q0T2J6</accession>
<comment type="function">
    <text evidence="1">Catalyzes the strictly specific dephosphorylation of 2'-deoxyribonucleoside 5'-monophosphates.</text>
</comment>
<comment type="catalytic activity">
    <reaction evidence="1">
        <text>a 2'-deoxyribonucleoside 5'-phosphate + H2O = a 2'-deoxyribonucleoside + phosphate</text>
        <dbReference type="Rhea" id="RHEA:36167"/>
        <dbReference type="ChEBI" id="CHEBI:15377"/>
        <dbReference type="ChEBI" id="CHEBI:18274"/>
        <dbReference type="ChEBI" id="CHEBI:43474"/>
        <dbReference type="ChEBI" id="CHEBI:65317"/>
        <dbReference type="EC" id="3.1.3.89"/>
    </reaction>
</comment>
<comment type="cofactor">
    <cofactor evidence="1">
        <name>a divalent metal cation</name>
        <dbReference type="ChEBI" id="CHEBI:60240"/>
    </cofactor>
</comment>
<comment type="subunit">
    <text evidence="1">Homodimer.</text>
</comment>
<comment type="subcellular location">
    <subcellularLocation>
        <location evidence="1">Cytoplasm</location>
    </subcellularLocation>
</comment>
<comment type="similarity">
    <text evidence="1">Belongs to the 5DNU family.</text>
</comment>
<sequence length="199" mass="22678">MKQSHFFAHLSRLKLINRWPLMRNVRTENVSEHSLQVAMVAHALAAIKNRKFGGNVNAERIALLAMYHDASEVLTGDLPTPVKYFNAQIAQEYKAIEKIAQQKLVDMVPEELRDIFAPLIDEHAYSDEEKSLVKQADALCAYLKCLEELAAGNNEFLLAKTRLEATLEARRSQEMDYFMEVFVPSFHLSLDEISQDSPL</sequence>
<proteinExistence type="inferred from homology"/>
<feature type="chain" id="PRO_1000064959" description="5'-deoxynucleotidase YfbR">
    <location>
        <begin position="1"/>
        <end position="199"/>
    </location>
</feature>
<feature type="domain" description="HD" evidence="2">
    <location>
        <begin position="30"/>
        <end position="142"/>
    </location>
</feature>
<feature type="binding site" evidence="1">
    <location>
        <begin position="18"/>
        <end position="19"/>
    </location>
    <ligand>
        <name>substrate</name>
    </ligand>
</feature>
<feature type="binding site" evidence="1">
    <location>
        <position position="33"/>
    </location>
    <ligand>
        <name>a divalent metal cation</name>
        <dbReference type="ChEBI" id="CHEBI:60240"/>
    </ligand>
</feature>
<feature type="binding site" evidence="1">
    <location>
        <position position="33"/>
    </location>
    <ligand>
        <name>substrate</name>
    </ligand>
</feature>
<feature type="binding site" evidence="1">
    <location>
        <position position="68"/>
    </location>
    <ligand>
        <name>a divalent metal cation</name>
        <dbReference type="ChEBI" id="CHEBI:60240"/>
    </ligand>
</feature>
<feature type="binding site" evidence="1">
    <location>
        <position position="69"/>
    </location>
    <ligand>
        <name>a divalent metal cation</name>
        <dbReference type="ChEBI" id="CHEBI:60240"/>
    </ligand>
</feature>
<feature type="binding site" evidence="1">
    <location>
        <position position="69"/>
    </location>
    <ligand>
        <name>substrate</name>
    </ligand>
</feature>
<feature type="binding site" evidence="1">
    <location>
        <begin position="77"/>
        <end position="80"/>
    </location>
    <ligand>
        <name>substrate</name>
    </ligand>
</feature>
<feature type="binding site" evidence="1">
    <location>
        <position position="137"/>
    </location>
    <ligand>
        <name>a divalent metal cation</name>
        <dbReference type="ChEBI" id="CHEBI:60240"/>
    </ligand>
</feature>
<feature type="binding site" evidence="1">
    <location>
        <position position="137"/>
    </location>
    <ligand>
        <name>substrate</name>
    </ligand>
</feature>
<feature type="site" description="Appears to be important in orienting the phosphate for catalysis" evidence="1">
    <location>
        <position position="18"/>
    </location>
</feature>
<organism>
    <name type="scientific">Shigella flexneri serotype 5b (strain 8401)</name>
    <dbReference type="NCBI Taxonomy" id="373384"/>
    <lineage>
        <taxon>Bacteria</taxon>
        <taxon>Pseudomonadati</taxon>
        <taxon>Pseudomonadota</taxon>
        <taxon>Gammaproteobacteria</taxon>
        <taxon>Enterobacterales</taxon>
        <taxon>Enterobacteriaceae</taxon>
        <taxon>Shigella</taxon>
    </lineage>
</organism>